<reference key="1">
    <citation type="journal article" date="2003" name="Nature">
        <title>The DNA sequence and analysis of human chromosome 14.</title>
        <authorList>
            <person name="Heilig R."/>
            <person name="Eckenberg R."/>
            <person name="Petit J.-L."/>
            <person name="Fonknechten N."/>
            <person name="Da Silva C."/>
            <person name="Cattolico L."/>
            <person name="Levy M."/>
            <person name="Barbe V."/>
            <person name="De Berardinis V."/>
            <person name="Ureta-Vidal A."/>
            <person name="Pelletier E."/>
            <person name="Vico V."/>
            <person name="Anthouard V."/>
            <person name="Rowen L."/>
            <person name="Madan A."/>
            <person name="Qin S."/>
            <person name="Sun H."/>
            <person name="Du H."/>
            <person name="Pepin K."/>
            <person name="Artiguenave F."/>
            <person name="Robert C."/>
            <person name="Cruaud C."/>
            <person name="Bruels T."/>
            <person name="Jaillon O."/>
            <person name="Friedlander L."/>
            <person name="Samson G."/>
            <person name="Brottier P."/>
            <person name="Cure S."/>
            <person name="Segurens B."/>
            <person name="Aniere F."/>
            <person name="Samain S."/>
            <person name="Crespeau H."/>
            <person name="Abbasi N."/>
            <person name="Aiach N."/>
            <person name="Boscus D."/>
            <person name="Dickhoff R."/>
            <person name="Dors M."/>
            <person name="Dubois I."/>
            <person name="Friedman C."/>
            <person name="Gouyvenoux M."/>
            <person name="James R."/>
            <person name="Madan A."/>
            <person name="Mairey-Estrada B."/>
            <person name="Mangenot S."/>
            <person name="Martins N."/>
            <person name="Menard M."/>
            <person name="Oztas S."/>
            <person name="Ratcliffe A."/>
            <person name="Shaffer T."/>
            <person name="Trask B."/>
            <person name="Vacherie B."/>
            <person name="Bellemere C."/>
            <person name="Belser C."/>
            <person name="Besnard-Gonnet M."/>
            <person name="Bartol-Mavel D."/>
            <person name="Boutard M."/>
            <person name="Briez-Silla S."/>
            <person name="Combette S."/>
            <person name="Dufosse-Laurent V."/>
            <person name="Ferron C."/>
            <person name="Lechaplais C."/>
            <person name="Louesse C."/>
            <person name="Muselet D."/>
            <person name="Magdelenat G."/>
            <person name="Pateau E."/>
            <person name="Petit E."/>
            <person name="Sirvain-Trukniewicz P."/>
            <person name="Trybou A."/>
            <person name="Vega-Czarny N."/>
            <person name="Bataille E."/>
            <person name="Bluet E."/>
            <person name="Bordelais I."/>
            <person name="Dubois M."/>
            <person name="Dumont C."/>
            <person name="Guerin T."/>
            <person name="Haffray S."/>
            <person name="Hammadi R."/>
            <person name="Muanga J."/>
            <person name="Pellouin V."/>
            <person name="Robert D."/>
            <person name="Wunderle E."/>
            <person name="Gauguet G."/>
            <person name="Roy A."/>
            <person name="Sainte-Marthe L."/>
            <person name="Verdier J."/>
            <person name="Verdier-Discala C."/>
            <person name="Hillier L.W."/>
            <person name="Fulton L."/>
            <person name="McPherson J."/>
            <person name="Matsuda F."/>
            <person name="Wilson R."/>
            <person name="Scarpelli C."/>
            <person name="Gyapay G."/>
            <person name="Wincker P."/>
            <person name="Saurin W."/>
            <person name="Quetier F."/>
            <person name="Waterston R."/>
            <person name="Hood L."/>
            <person name="Weissenbach J."/>
        </authorList>
    </citation>
    <scope>NUCLEOTIDE SEQUENCE [LARGE SCALE GENOMIC DNA] (IMGT ALLELE IGHV3-64D*06)</scope>
</reference>
<reference key="2">
    <citation type="journal article" date="2001" name="Exp. Clin. Immunogenet.">
        <title>Nomenclature of the human immunoglobulin heavy (IGH) genes.</title>
        <authorList>
            <person name="Lefranc M.P."/>
        </authorList>
    </citation>
    <scope>NOMENCLATURE</scope>
</reference>
<reference key="3">
    <citation type="book" date="2001" name="The Immunoglobulin FactsBook.">
        <title>The Immunoglobulin FactsBook.</title>
        <editorList>
            <person name="Lefranc M.P."/>
            <person name="Lefranc G."/>
        </editorList>
        <authorList>
            <person name="Lefranc M.P."/>
            <person name="Lefranc G."/>
        </authorList>
    </citation>
    <scope>NOMENCLATURE</scope>
</reference>
<reference key="4">
    <citation type="journal article" date="2007" name="Annu. Rev. Genet.">
        <title>Immunoglobulin somatic hypermutation.</title>
        <authorList>
            <person name="Teng G."/>
            <person name="Papavasiliou F.N."/>
        </authorList>
    </citation>
    <scope>REVIEW ON SOMATIC HYPERMUTATION</scope>
</reference>
<reference key="5">
    <citation type="journal article" date="2010" name="J. Allergy Clin. Immunol.">
        <title>Structure and function of immunoglobulins.</title>
        <authorList>
            <person name="Schroeder H.W. Jr."/>
            <person name="Cavacini L."/>
        </authorList>
    </citation>
    <scope>REVIEW ON IMMUNOGLOBULINS</scope>
</reference>
<reference key="6">
    <citation type="journal article" date="2012" name="Nat. Rev. Immunol.">
        <title>Molecular programming of B cell memory.</title>
        <authorList>
            <person name="McHeyzer-Williams M."/>
            <person name="Okitsu S."/>
            <person name="Wang N."/>
            <person name="McHeyzer-Williams L."/>
        </authorList>
    </citation>
    <scope>REVIEW ON FUNCTION</scope>
</reference>
<reference key="7">
    <citation type="journal article" date="2014" name="Front. Immunol.">
        <title>Immunoglobulin and T Cell Receptor Genes: IMGT((R)) and the Birth and Rise of Immunoinformatics.</title>
        <authorList>
            <person name="Lefranc M.P."/>
        </authorList>
    </citation>
    <scope>NOMENCLATURE</scope>
</reference>
<accession>A0A0J9YX35</accession>
<sequence>MEFWLSWVLLVAILKDVQCEVQLVESGGGLVQPGGSLRLSCSASGFTFSSYAMHWVRQAPGKGLEYVSAISSNGGSTYYADSVKGRFTISRDNSKNTLYLQMSSLRAEDTAVYYCVK</sequence>
<name>HV64D_HUMAN</name>
<evidence type="ECO:0000250" key="1">
    <source>
        <dbReference type="UniProtKB" id="P23083"/>
    </source>
</evidence>
<evidence type="ECO:0000255" key="2"/>
<evidence type="ECO:0000255" key="3">
    <source>
        <dbReference type="PROSITE-ProRule" id="PRU00114"/>
    </source>
</evidence>
<evidence type="ECO:0000303" key="4">
    <source>
    </source>
</evidence>
<evidence type="ECO:0000303" key="5">
    <source>
    </source>
</evidence>
<evidence type="ECO:0000303" key="6">
    <source>
    </source>
</evidence>
<evidence type="ECO:0000303" key="7">
    <source>
    </source>
</evidence>
<evidence type="ECO:0000303" key="8">
    <source>
    </source>
</evidence>
<evidence type="ECO:0000303" key="9">
    <source ref="3"/>
</evidence>
<evidence type="ECO:0000305" key="10"/>
<dbReference type="EMBL" id="AC247036">
    <property type="status" value="NOT_ANNOTATED_CDS"/>
    <property type="molecule type" value="Genomic_DNA"/>
</dbReference>
<dbReference type="SMR" id="A0A0J9YX35"/>
<dbReference type="FunCoup" id="A0A0J9YX35">
    <property type="interactions" value="323"/>
</dbReference>
<dbReference type="BioMuta" id="HGNC:49603"/>
<dbReference type="jPOST" id="A0A0J9YX35"/>
<dbReference type="MassIVE" id="A0A0J9YX35"/>
<dbReference type="Ensembl" id="ENST00000632099.1">
    <property type="protein sequence ID" value="ENSP00000488230.1"/>
    <property type="gene ID" value="ENSG00000282639.1"/>
</dbReference>
<dbReference type="AGR" id="HGNC:49603"/>
<dbReference type="GeneCards" id="IGHV3-64D"/>
<dbReference type="HGNC" id="HGNC:49603">
    <property type="gene designation" value="IGHV3-64D"/>
</dbReference>
<dbReference type="HPA" id="ENSG00000282639">
    <property type="expression patterns" value="Tissue enhanced (intestine, lymphoid tissue)"/>
</dbReference>
<dbReference type="neXtProt" id="NX_A0A0J9YX35"/>
<dbReference type="VEuPathDB" id="HostDB:ENSG00000282639"/>
<dbReference type="GeneTree" id="ENSGT01050000244871"/>
<dbReference type="InParanoid" id="A0A0J9YX35"/>
<dbReference type="OMA" id="SVITHIQ"/>
<dbReference type="PAN-GO" id="A0A0J9YX35">
    <property type="GO annotations" value="11 GO annotations based on evolutionary models"/>
</dbReference>
<dbReference type="ChiTaRS" id="IGHV3-64D">
    <property type="organism name" value="human"/>
</dbReference>
<dbReference type="Pharos" id="A0A0J9YX35">
    <property type="development level" value="Tdark"/>
</dbReference>
<dbReference type="PRO" id="PR:A0A0J9YX35"/>
<dbReference type="Proteomes" id="UP000005640">
    <property type="component" value="Chromosome 14"/>
</dbReference>
<dbReference type="RNAct" id="A0A0J9YX35">
    <property type="molecule type" value="protein"/>
</dbReference>
<dbReference type="Bgee" id="ENSG00000282639">
    <property type="expression patterns" value="Expressed in rectum and 85 other cell types or tissues"/>
</dbReference>
<dbReference type="GO" id="GO:0005576">
    <property type="term" value="C:extracellular region"/>
    <property type="evidence" value="ECO:0007669"/>
    <property type="project" value="UniProtKB-SubCell"/>
</dbReference>
<dbReference type="GO" id="GO:0019814">
    <property type="term" value="C:immunoglobulin complex"/>
    <property type="evidence" value="ECO:0007669"/>
    <property type="project" value="UniProtKB-KW"/>
</dbReference>
<dbReference type="GO" id="GO:0005886">
    <property type="term" value="C:plasma membrane"/>
    <property type="evidence" value="ECO:0007669"/>
    <property type="project" value="UniProtKB-SubCell"/>
</dbReference>
<dbReference type="GO" id="GO:0003823">
    <property type="term" value="F:antigen binding"/>
    <property type="evidence" value="ECO:0000318"/>
    <property type="project" value="GO_Central"/>
</dbReference>
<dbReference type="GO" id="GO:0016064">
    <property type="term" value="P:immunoglobulin mediated immune response"/>
    <property type="evidence" value="ECO:0000318"/>
    <property type="project" value="GO_Central"/>
</dbReference>
<dbReference type="CDD" id="cd04981">
    <property type="entry name" value="IgV_H"/>
    <property type="match status" value="1"/>
</dbReference>
<dbReference type="FunFam" id="2.60.40.10:FF:000942">
    <property type="entry name" value="Immunoglobulin heavy variable 3-23"/>
    <property type="match status" value="1"/>
</dbReference>
<dbReference type="Gene3D" id="2.60.40.10">
    <property type="entry name" value="Immunoglobulins"/>
    <property type="match status" value="1"/>
</dbReference>
<dbReference type="InterPro" id="IPR007110">
    <property type="entry name" value="Ig-like_dom"/>
</dbReference>
<dbReference type="InterPro" id="IPR036179">
    <property type="entry name" value="Ig-like_dom_sf"/>
</dbReference>
<dbReference type="InterPro" id="IPR013783">
    <property type="entry name" value="Ig-like_fold"/>
</dbReference>
<dbReference type="InterPro" id="IPR013106">
    <property type="entry name" value="Ig_V-set"/>
</dbReference>
<dbReference type="InterPro" id="IPR050199">
    <property type="entry name" value="IgHV"/>
</dbReference>
<dbReference type="PANTHER" id="PTHR23266">
    <property type="entry name" value="IMMUNOGLOBULIN HEAVY CHAIN"/>
    <property type="match status" value="1"/>
</dbReference>
<dbReference type="Pfam" id="PF07686">
    <property type="entry name" value="V-set"/>
    <property type="match status" value="1"/>
</dbReference>
<dbReference type="SMART" id="SM00406">
    <property type="entry name" value="IGv"/>
    <property type="match status" value="1"/>
</dbReference>
<dbReference type="SUPFAM" id="SSF48726">
    <property type="entry name" value="Immunoglobulin"/>
    <property type="match status" value="1"/>
</dbReference>
<dbReference type="PROSITE" id="PS50835">
    <property type="entry name" value="IG_LIKE"/>
    <property type="match status" value="1"/>
</dbReference>
<keyword id="KW-1064">Adaptive immunity</keyword>
<keyword id="KW-1003">Cell membrane</keyword>
<keyword id="KW-1015">Disulfide bond</keyword>
<keyword id="KW-0391">Immunity</keyword>
<keyword id="KW-1280">Immunoglobulin</keyword>
<keyword id="KW-0393">Immunoglobulin domain</keyword>
<keyword id="KW-0472">Membrane</keyword>
<keyword id="KW-1267">Proteomics identification</keyword>
<keyword id="KW-1185">Reference proteome</keyword>
<keyword id="KW-0964">Secreted</keyword>
<keyword id="KW-0732">Signal</keyword>
<organism>
    <name type="scientific">Homo sapiens</name>
    <name type="common">Human</name>
    <dbReference type="NCBI Taxonomy" id="9606"/>
    <lineage>
        <taxon>Eukaryota</taxon>
        <taxon>Metazoa</taxon>
        <taxon>Chordata</taxon>
        <taxon>Craniata</taxon>
        <taxon>Vertebrata</taxon>
        <taxon>Euteleostomi</taxon>
        <taxon>Mammalia</taxon>
        <taxon>Eutheria</taxon>
        <taxon>Euarchontoglires</taxon>
        <taxon>Primates</taxon>
        <taxon>Haplorrhini</taxon>
        <taxon>Catarrhini</taxon>
        <taxon>Hominidae</taxon>
        <taxon>Homo</taxon>
    </lineage>
</organism>
<protein>
    <recommendedName>
        <fullName evidence="4 9">Immunoglobulin heavy variable 3-64D</fullName>
    </recommendedName>
</protein>
<proteinExistence type="evidence at protein level"/>
<gene>
    <name evidence="4 9" type="primary">IGHV3-64D</name>
</gene>
<feature type="signal peptide" evidence="2">
    <location>
        <begin position="1"/>
        <end position="19"/>
    </location>
</feature>
<feature type="chain" id="PRO_5010424583" description="Immunoglobulin heavy variable 3-64D" evidence="2">
    <location>
        <begin position="20"/>
        <end position="117"/>
    </location>
</feature>
<feature type="domain" description="Ig-like" evidence="3">
    <location>
        <begin position="20"/>
        <end position="117" status="greater than"/>
    </location>
</feature>
<feature type="region of interest" description="Framework-1" evidence="1">
    <location>
        <begin position="20"/>
        <end position="44"/>
    </location>
</feature>
<feature type="region of interest" description="Complementarity-determining-1" evidence="1">
    <location>
        <begin position="45"/>
        <end position="52"/>
    </location>
</feature>
<feature type="region of interest" description="Framework-2" evidence="1">
    <location>
        <begin position="53"/>
        <end position="69"/>
    </location>
</feature>
<feature type="region of interest" description="Complementarity-determining-2" evidence="1">
    <location>
        <begin position="70"/>
        <end position="77"/>
    </location>
</feature>
<feature type="region of interest" description="Framework-3" evidence="1">
    <location>
        <begin position="78"/>
        <end position="115"/>
    </location>
</feature>
<feature type="region of interest" description="Complementarity-determining-3" evidence="1">
    <location>
        <begin position="116"/>
        <end position="117" status="greater than"/>
    </location>
</feature>
<feature type="disulfide bond" evidence="3">
    <location>
        <begin position="41"/>
        <end position="115"/>
    </location>
</feature>
<feature type="non-terminal residue">
    <location>
        <position position="117"/>
    </location>
</feature>
<comment type="function">
    <text evidence="5 6 7 8">V region of the variable domain of immunoglobulin heavy chains that participates in the antigen recognition (PubMed:24600447). Immunoglobulins, also known as antibodies, are membrane-bound or secreted glycoproteins produced by B lymphocytes. In the recognition phase of humoral immunity, the membrane-bound immunoglobulins serve as receptors which, upon binding of a specific antigen, trigger the clonal expansion and differentiation of B lymphocytes into immunoglobulins-secreting plasma cells. Secreted immunoglobulins mediate the effector phase of humoral immunity, which results in the elimination of bound antigens (PubMed:20176268, PubMed:22158414). The antigen binding site is formed by the variable domain of one heavy chain, together with that of its associated light chain. Thus, each immunoglobulin has two antigen binding sites with remarkable affinity for a particular antigen. The variable domains are assembled by a process called V-(D)-J rearrangement and can then be subjected to somatic hypermutations which, after exposure to antigen and selection, allow affinity maturation for a particular antigen (PubMed:17576170, PubMed:20176268).</text>
</comment>
<comment type="subunit">
    <text evidence="6">Immunoglobulins are composed of two identical heavy chains and two identical light chains; disulfide-linked.</text>
</comment>
<comment type="subcellular location">
    <subcellularLocation>
        <location evidence="6 7">Secreted</location>
    </subcellularLocation>
    <subcellularLocation>
        <location evidence="6 7">Cell membrane</location>
    </subcellularLocation>
</comment>
<comment type="polymorphism">
    <text evidence="10">There are several alleles. The sequence shown is that of IMGT allele IGHV3-64D*06.</text>
</comment>
<comment type="caution">
    <text evidence="10">For examples of full-length immunoglobulin heavy chains (of different isotypes) see AC P0DOX2, AC P0DOX3, AC P0DOX4, AC P0DOX5 and AC P0DOX6.</text>
</comment>